<reference key="1">
    <citation type="submission" date="2005-08" db="EMBL/GenBank/DDBJ databases">
        <title>Complete sequence of Synechococcus sp. CC9902.</title>
        <authorList>
            <person name="Copeland A."/>
            <person name="Lucas S."/>
            <person name="Lapidus A."/>
            <person name="Barry K."/>
            <person name="Detter J.C."/>
            <person name="Glavina T."/>
            <person name="Hammon N."/>
            <person name="Israni S."/>
            <person name="Pitluck S."/>
            <person name="Martinez M."/>
            <person name="Schmutz J."/>
            <person name="Larimer F."/>
            <person name="Land M."/>
            <person name="Kyrpides N."/>
            <person name="Ivanova N."/>
            <person name="Richardson P."/>
        </authorList>
    </citation>
    <scope>NUCLEOTIDE SEQUENCE [LARGE SCALE GENOMIC DNA]</scope>
    <source>
        <strain>CC9902</strain>
    </source>
</reference>
<evidence type="ECO:0000250" key="1"/>
<evidence type="ECO:0000255" key="2">
    <source>
        <dbReference type="HAMAP-Rule" id="MF_01346"/>
    </source>
</evidence>
<dbReference type="EC" id="7.1.2.2" evidence="2"/>
<dbReference type="EMBL" id="CP000097">
    <property type="protein sequence ID" value="ABB25456.1"/>
    <property type="molecule type" value="Genomic_DNA"/>
</dbReference>
<dbReference type="RefSeq" id="WP_011359305.1">
    <property type="nucleotide sequence ID" value="NC_007513.1"/>
</dbReference>
<dbReference type="SMR" id="Q3AZM1"/>
<dbReference type="STRING" id="316279.Syncc9902_0488"/>
<dbReference type="KEGG" id="sye:Syncc9902_0488"/>
<dbReference type="eggNOG" id="COG0056">
    <property type="taxonomic scope" value="Bacteria"/>
</dbReference>
<dbReference type="HOGENOM" id="CLU_010091_2_1_3"/>
<dbReference type="OrthoDB" id="9803053at2"/>
<dbReference type="Proteomes" id="UP000002712">
    <property type="component" value="Chromosome"/>
</dbReference>
<dbReference type="GO" id="GO:0031676">
    <property type="term" value="C:plasma membrane-derived thylakoid membrane"/>
    <property type="evidence" value="ECO:0007669"/>
    <property type="project" value="UniProtKB-SubCell"/>
</dbReference>
<dbReference type="GO" id="GO:0045259">
    <property type="term" value="C:proton-transporting ATP synthase complex"/>
    <property type="evidence" value="ECO:0007669"/>
    <property type="project" value="UniProtKB-KW"/>
</dbReference>
<dbReference type="GO" id="GO:0043531">
    <property type="term" value="F:ADP binding"/>
    <property type="evidence" value="ECO:0007669"/>
    <property type="project" value="TreeGrafter"/>
</dbReference>
<dbReference type="GO" id="GO:0005524">
    <property type="term" value="F:ATP binding"/>
    <property type="evidence" value="ECO:0007669"/>
    <property type="project" value="UniProtKB-UniRule"/>
</dbReference>
<dbReference type="GO" id="GO:0046933">
    <property type="term" value="F:proton-transporting ATP synthase activity, rotational mechanism"/>
    <property type="evidence" value="ECO:0007669"/>
    <property type="project" value="UniProtKB-UniRule"/>
</dbReference>
<dbReference type="CDD" id="cd18113">
    <property type="entry name" value="ATP-synt_F1_alpha_C"/>
    <property type="match status" value="1"/>
</dbReference>
<dbReference type="CDD" id="cd18116">
    <property type="entry name" value="ATP-synt_F1_alpha_N"/>
    <property type="match status" value="1"/>
</dbReference>
<dbReference type="CDD" id="cd01132">
    <property type="entry name" value="F1-ATPase_alpha_CD"/>
    <property type="match status" value="1"/>
</dbReference>
<dbReference type="FunFam" id="1.20.150.20:FF:000001">
    <property type="entry name" value="ATP synthase subunit alpha"/>
    <property type="match status" value="1"/>
</dbReference>
<dbReference type="FunFam" id="2.40.30.20:FF:000001">
    <property type="entry name" value="ATP synthase subunit alpha"/>
    <property type="match status" value="1"/>
</dbReference>
<dbReference type="FunFam" id="3.40.50.300:FF:000002">
    <property type="entry name" value="ATP synthase subunit alpha"/>
    <property type="match status" value="1"/>
</dbReference>
<dbReference type="Gene3D" id="2.40.30.20">
    <property type="match status" value="1"/>
</dbReference>
<dbReference type="Gene3D" id="1.20.150.20">
    <property type="entry name" value="ATP synthase alpha/beta chain, C-terminal domain"/>
    <property type="match status" value="1"/>
</dbReference>
<dbReference type="Gene3D" id="3.40.50.300">
    <property type="entry name" value="P-loop containing nucleotide triphosphate hydrolases"/>
    <property type="match status" value="1"/>
</dbReference>
<dbReference type="HAMAP" id="MF_01346">
    <property type="entry name" value="ATP_synth_alpha_bact"/>
    <property type="match status" value="1"/>
</dbReference>
<dbReference type="InterPro" id="IPR023366">
    <property type="entry name" value="ATP_synth_asu-like_sf"/>
</dbReference>
<dbReference type="InterPro" id="IPR000793">
    <property type="entry name" value="ATP_synth_asu_C"/>
</dbReference>
<dbReference type="InterPro" id="IPR038376">
    <property type="entry name" value="ATP_synth_asu_C_sf"/>
</dbReference>
<dbReference type="InterPro" id="IPR033732">
    <property type="entry name" value="ATP_synth_F1_a_nt-bd_dom"/>
</dbReference>
<dbReference type="InterPro" id="IPR005294">
    <property type="entry name" value="ATP_synth_F1_asu"/>
</dbReference>
<dbReference type="InterPro" id="IPR020003">
    <property type="entry name" value="ATPase_a/bsu_AS"/>
</dbReference>
<dbReference type="InterPro" id="IPR004100">
    <property type="entry name" value="ATPase_F1/V1/A1_a/bsu_N"/>
</dbReference>
<dbReference type="InterPro" id="IPR036121">
    <property type="entry name" value="ATPase_F1/V1/A1_a/bsu_N_sf"/>
</dbReference>
<dbReference type="InterPro" id="IPR000194">
    <property type="entry name" value="ATPase_F1/V1/A1_a/bsu_nucl-bd"/>
</dbReference>
<dbReference type="InterPro" id="IPR027417">
    <property type="entry name" value="P-loop_NTPase"/>
</dbReference>
<dbReference type="NCBIfam" id="TIGR00962">
    <property type="entry name" value="atpA"/>
    <property type="match status" value="1"/>
</dbReference>
<dbReference type="NCBIfam" id="NF009884">
    <property type="entry name" value="PRK13343.1"/>
    <property type="match status" value="1"/>
</dbReference>
<dbReference type="PANTHER" id="PTHR48082">
    <property type="entry name" value="ATP SYNTHASE SUBUNIT ALPHA, MITOCHONDRIAL"/>
    <property type="match status" value="1"/>
</dbReference>
<dbReference type="PANTHER" id="PTHR48082:SF2">
    <property type="entry name" value="ATP SYNTHASE SUBUNIT ALPHA, MITOCHONDRIAL"/>
    <property type="match status" value="1"/>
</dbReference>
<dbReference type="Pfam" id="PF00006">
    <property type="entry name" value="ATP-synt_ab"/>
    <property type="match status" value="1"/>
</dbReference>
<dbReference type="Pfam" id="PF00306">
    <property type="entry name" value="ATP-synt_ab_C"/>
    <property type="match status" value="1"/>
</dbReference>
<dbReference type="Pfam" id="PF02874">
    <property type="entry name" value="ATP-synt_ab_N"/>
    <property type="match status" value="1"/>
</dbReference>
<dbReference type="PIRSF" id="PIRSF039088">
    <property type="entry name" value="F_ATPase_subunit_alpha"/>
    <property type="match status" value="1"/>
</dbReference>
<dbReference type="SUPFAM" id="SSF47917">
    <property type="entry name" value="C-terminal domain of alpha and beta subunits of F1 ATP synthase"/>
    <property type="match status" value="1"/>
</dbReference>
<dbReference type="SUPFAM" id="SSF50615">
    <property type="entry name" value="N-terminal domain of alpha and beta subunits of F1 ATP synthase"/>
    <property type="match status" value="1"/>
</dbReference>
<dbReference type="SUPFAM" id="SSF52540">
    <property type="entry name" value="P-loop containing nucleoside triphosphate hydrolases"/>
    <property type="match status" value="1"/>
</dbReference>
<dbReference type="PROSITE" id="PS00152">
    <property type="entry name" value="ATPASE_ALPHA_BETA"/>
    <property type="match status" value="1"/>
</dbReference>
<organism>
    <name type="scientific">Synechococcus sp. (strain CC9902)</name>
    <dbReference type="NCBI Taxonomy" id="316279"/>
    <lineage>
        <taxon>Bacteria</taxon>
        <taxon>Bacillati</taxon>
        <taxon>Cyanobacteriota</taxon>
        <taxon>Cyanophyceae</taxon>
        <taxon>Synechococcales</taxon>
        <taxon>Synechococcaceae</taxon>
        <taxon>Synechococcus</taxon>
    </lineage>
</organism>
<feature type="chain" id="PRO_0000238378" description="ATP synthase subunit alpha">
    <location>
        <begin position="1"/>
        <end position="506"/>
    </location>
</feature>
<feature type="binding site" evidence="2">
    <location>
        <begin position="170"/>
        <end position="177"/>
    </location>
    <ligand>
        <name>ATP</name>
        <dbReference type="ChEBI" id="CHEBI:30616"/>
    </ligand>
</feature>
<feature type="site" description="Required for activity" evidence="2">
    <location>
        <position position="363"/>
    </location>
</feature>
<gene>
    <name evidence="2" type="primary">atpA</name>
    <name type="ordered locus">Syncc9902_0488</name>
</gene>
<protein>
    <recommendedName>
        <fullName evidence="2">ATP synthase subunit alpha</fullName>
        <ecNumber evidence="2">7.1.2.2</ecNumber>
    </recommendedName>
    <alternativeName>
        <fullName evidence="2">ATP synthase F1 sector subunit alpha</fullName>
    </alternativeName>
    <alternativeName>
        <fullName evidence="2">F-ATPase subunit alpha</fullName>
    </alternativeName>
</protein>
<keyword id="KW-0066">ATP synthesis</keyword>
<keyword id="KW-0067">ATP-binding</keyword>
<keyword id="KW-0139">CF(1)</keyword>
<keyword id="KW-0375">Hydrogen ion transport</keyword>
<keyword id="KW-0406">Ion transport</keyword>
<keyword id="KW-0472">Membrane</keyword>
<keyword id="KW-0547">Nucleotide-binding</keyword>
<keyword id="KW-1185">Reference proteome</keyword>
<keyword id="KW-0793">Thylakoid</keyword>
<keyword id="KW-1278">Translocase</keyword>
<keyword id="KW-0813">Transport</keyword>
<proteinExistence type="inferred from homology"/>
<accession>Q3AZM1</accession>
<sequence length="506" mass="53949">MVSIRPDEISAILKQQIEDYDKSVSVSNVGSVLQVGDGIARVYGLQQAMAGELLEFEDGTEGIALNLEDDNVGAVLMGEGLGIQEGSTVKATGKIASVPVGDAMLGRVINSLGRPIDGKGDIAASETRLIESMAPGIIQRKSVHEPMQTGITAIDAMIPVGRGQRELIIGDRQTGKTAIAIDTILNQADQDMICVYVAIGQKAASVANVVEVLRERGALGYTVIVAASASEPAALQYLAPYTGASIAEYFMYKGKATLVIYDDLSKQAAAYRQMSLLLRRPPGREAYPGDVFYCHSRLLERAAKLSDAMGKGSMTALPIIETQAGDVSAYIPTNVISITDGQIFLSSDLFNSGLRPAINVGISVSRVGGAAQTKAIKKIAGTLKLELAQFDELAAFSQFASDLDAATQQQLSRGKRLRELLKQPQFSPLILAEQVAIVYAGVKGLIDAVPVDQVVNFSRELREYLKSNKPEFINEIQEKKVLSPEAESVLKAAISEVVSTMVASAN</sequence>
<comment type="function">
    <text evidence="2">Produces ATP from ADP in the presence of a proton gradient across the membrane. The alpha chain is a regulatory subunit.</text>
</comment>
<comment type="catalytic activity">
    <reaction evidence="2">
        <text>ATP + H2O + 4 H(+)(in) = ADP + phosphate + 5 H(+)(out)</text>
        <dbReference type="Rhea" id="RHEA:57720"/>
        <dbReference type="ChEBI" id="CHEBI:15377"/>
        <dbReference type="ChEBI" id="CHEBI:15378"/>
        <dbReference type="ChEBI" id="CHEBI:30616"/>
        <dbReference type="ChEBI" id="CHEBI:43474"/>
        <dbReference type="ChEBI" id="CHEBI:456216"/>
        <dbReference type="EC" id="7.1.2.2"/>
    </reaction>
</comment>
<comment type="subunit">
    <text evidence="1">F-type ATPases have 2 components, CF(1) - the catalytic core - and CF(0) - the membrane proton channel. CF(1) has five subunits: alpha(3), beta(3), gamma(1), delta(1), epsilon(1). CF(0) has four main subunits: a(1), b(1), b'(1) and c(9-12) (By similarity).</text>
</comment>
<comment type="subcellular location">
    <subcellularLocation>
        <location evidence="2">Cellular thylakoid membrane</location>
        <topology evidence="2">Peripheral membrane protein</topology>
    </subcellularLocation>
</comment>
<comment type="similarity">
    <text evidence="2">Belongs to the ATPase alpha/beta chains family.</text>
</comment>
<name>ATPA_SYNS9</name>